<keyword id="KW-0027">Amidation</keyword>
<keyword id="KW-0165">Cleavage on pair of basic residues</keyword>
<keyword id="KW-1015">Disulfide bond</keyword>
<keyword id="KW-0372">Hormone</keyword>
<keyword id="KW-1185">Reference proteome</keyword>
<keyword id="KW-0964">Secreted</keyword>
<keyword id="KW-0732">Signal</keyword>
<feature type="signal peptide" evidence="3">
    <location>
        <begin position="1"/>
        <end position="26"/>
    </location>
</feature>
<feature type="propeptide" id="PRO_0000004092" evidence="1">
    <location>
        <begin position="27"/>
        <end position="86"/>
    </location>
</feature>
<feature type="peptide" id="PRO_0000004093" description="Calcitonin gene-related peptide 2">
    <location>
        <begin position="89"/>
        <end position="125"/>
    </location>
</feature>
<feature type="propeptide" id="PRO_0000004094" evidence="1">
    <location>
        <begin position="131"/>
        <end position="134"/>
    </location>
</feature>
<feature type="region of interest" description="Disordered" evidence="4">
    <location>
        <begin position="65"/>
        <end position="91"/>
    </location>
</feature>
<feature type="compositionally biased region" description="Low complexity" evidence="4">
    <location>
        <begin position="77"/>
        <end position="89"/>
    </location>
</feature>
<feature type="modified residue" description="Phenylalanine amide" evidence="1">
    <location>
        <position position="125"/>
    </location>
</feature>
<feature type="disulfide bond" evidence="2">
    <location>
        <begin position="90"/>
        <end position="95"/>
    </location>
</feature>
<gene>
    <name evidence="6" type="primary">Calcb</name>
</gene>
<sequence length="134" mass="14965">MDFWKFFPFLALSSMWVLCLASSLQAAPFRSALESSLDLGTLSDQEKHLLLAALIQDYEQKARKLEQEEQETEGSRKGSSSSVISQKRSCNTATCVTHRLAGLLRRSGGVVKDNFVPTNVGSKAFGRRRRDLRV</sequence>
<name>CALCB_RAT</name>
<proteinExistence type="evidence at transcript level"/>
<dbReference type="EMBL" id="M11596">
    <property type="protein sequence ID" value="AAA40850.1"/>
    <property type="molecule type" value="mRNA"/>
</dbReference>
<dbReference type="PIR" id="A44173">
    <property type="entry name" value="A44173"/>
</dbReference>
<dbReference type="RefSeq" id="NP_612522.1">
    <property type="nucleotide sequence ID" value="NM_138513.1"/>
</dbReference>
<dbReference type="SMR" id="P10093"/>
<dbReference type="FunCoup" id="P10093">
    <property type="interactions" value="61"/>
</dbReference>
<dbReference type="STRING" id="10116.ENSRNOP00000014764"/>
<dbReference type="iPTMnet" id="P10093"/>
<dbReference type="PhosphoSitePlus" id="P10093"/>
<dbReference type="PaxDb" id="10116-ENSRNOP00000014764"/>
<dbReference type="ABCD" id="P10093">
    <property type="antibodies" value="1 sequenced antibody"/>
</dbReference>
<dbReference type="GeneID" id="171519"/>
<dbReference type="KEGG" id="rno:171519"/>
<dbReference type="UCSC" id="RGD:620997">
    <property type="organism name" value="rat"/>
</dbReference>
<dbReference type="AGR" id="RGD:620997"/>
<dbReference type="CTD" id="797"/>
<dbReference type="RGD" id="620997">
    <property type="gene designation" value="Calcb"/>
</dbReference>
<dbReference type="eggNOG" id="ENOG502SQMP">
    <property type="taxonomic scope" value="Eukaryota"/>
</dbReference>
<dbReference type="InParanoid" id="P10093"/>
<dbReference type="PhylomeDB" id="P10093"/>
<dbReference type="Reactome" id="R-RNO-419812">
    <property type="pathway name" value="Calcitonin-like ligand receptors"/>
</dbReference>
<dbReference type="PRO" id="PR:P10093"/>
<dbReference type="Proteomes" id="UP000002494">
    <property type="component" value="Unplaced"/>
</dbReference>
<dbReference type="GO" id="GO:0005615">
    <property type="term" value="C:extracellular space"/>
    <property type="evidence" value="ECO:0000266"/>
    <property type="project" value="RGD"/>
</dbReference>
<dbReference type="GO" id="GO:0031716">
    <property type="term" value="F:calcitonin receptor binding"/>
    <property type="evidence" value="ECO:0000318"/>
    <property type="project" value="GO_Central"/>
</dbReference>
<dbReference type="GO" id="GO:0005179">
    <property type="term" value="F:hormone activity"/>
    <property type="evidence" value="ECO:0000266"/>
    <property type="project" value="RGD"/>
</dbReference>
<dbReference type="GO" id="GO:0007189">
    <property type="term" value="P:adenylate cyclase-activating G protein-coupled receptor signaling pathway"/>
    <property type="evidence" value="ECO:0000318"/>
    <property type="project" value="GO_Central"/>
</dbReference>
<dbReference type="GO" id="GO:1990408">
    <property type="term" value="P:calcitonin gene-related peptide receptor signaling pathway"/>
    <property type="evidence" value="ECO:0000266"/>
    <property type="project" value="RGD"/>
</dbReference>
<dbReference type="GO" id="GO:0051480">
    <property type="term" value="P:regulation of cytosolic calcium ion concentration"/>
    <property type="evidence" value="ECO:0000318"/>
    <property type="project" value="GO_Central"/>
</dbReference>
<dbReference type="Gene3D" id="6.10.250.2190">
    <property type="match status" value="1"/>
</dbReference>
<dbReference type="InterPro" id="IPR021117">
    <property type="entry name" value="Calcitonin-like"/>
</dbReference>
<dbReference type="InterPro" id="IPR021116">
    <property type="entry name" value="Calcitonin/adrenomedullin"/>
</dbReference>
<dbReference type="InterPro" id="IPR018360">
    <property type="entry name" value="Calcitonin_CS"/>
</dbReference>
<dbReference type="InterPro" id="IPR015476">
    <property type="entry name" value="Calcitonin_gene-rel_peptide"/>
</dbReference>
<dbReference type="InterPro" id="IPR001693">
    <property type="entry name" value="Calcitonin_peptide-like"/>
</dbReference>
<dbReference type="PANTHER" id="PTHR10505:SF3">
    <property type="entry name" value="CALCITONIN GENE-RELATED PEPTIDE 2"/>
    <property type="match status" value="1"/>
</dbReference>
<dbReference type="PANTHER" id="PTHR10505">
    <property type="entry name" value="CALCITONIN-RELATED"/>
    <property type="match status" value="1"/>
</dbReference>
<dbReference type="Pfam" id="PF00214">
    <property type="entry name" value="Calc_CGRP_IAPP"/>
    <property type="match status" value="1"/>
</dbReference>
<dbReference type="PRINTS" id="PR00817">
    <property type="entry name" value="CALCITONINB"/>
</dbReference>
<dbReference type="SMART" id="SM00113">
    <property type="entry name" value="CALCITONIN"/>
    <property type="match status" value="1"/>
</dbReference>
<dbReference type="PROSITE" id="PS00258">
    <property type="entry name" value="CALCITONIN"/>
    <property type="match status" value="1"/>
</dbReference>
<reference key="1">
    <citation type="journal article" date="1985" name="Science">
        <title>Expression in brain of a messenger RNA encoding a novel neuropeptide homologous to calcitonin gene-related peptide.</title>
        <authorList>
            <person name="Amara S.G."/>
            <person name="Arriza J.L."/>
            <person name="Leff S.E."/>
            <person name="Swanson L.W."/>
            <person name="Evans R.M."/>
            <person name="Rosenfeld M.G."/>
        </authorList>
    </citation>
    <scope>NUCLEOTIDE SEQUENCE [MRNA]</scope>
</reference>
<protein>
    <recommendedName>
        <fullName>Calcitonin gene-related peptide 2</fullName>
        <shortName evidence="2">CGRP2</shortName>
    </recommendedName>
    <alternativeName>
        <fullName>Beta-type CGRP</fullName>
    </alternativeName>
    <alternativeName>
        <fullName>Calcitonin gene-related peptide II</fullName>
        <shortName>CGRP-II</shortName>
    </alternativeName>
</protein>
<organism>
    <name type="scientific">Rattus norvegicus</name>
    <name type="common">Rat</name>
    <dbReference type="NCBI Taxonomy" id="10116"/>
    <lineage>
        <taxon>Eukaryota</taxon>
        <taxon>Metazoa</taxon>
        <taxon>Chordata</taxon>
        <taxon>Craniata</taxon>
        <taxon>Vertebrata</taxon>
        <taxon>Euteleostomi</taxon>
        <taxon>Mammalia</taxon>
        <taxon>Eutheria</taxon>
        <taxon>Euarchontoglires</taxon>
        <taxon>Glires</taxon>
        <taxon>Rodentia</taxon>
        <taxon>Myomorpha</taxon>
        <taxon>Muroidea</taxon>
        <taxon>Muridae</taxon>
        <taxon>Murinae</taxon>
        <taxon>Rattus</taxon>
    </lineage>
</organism>
<evidence type="ECO:0000250" key="1"/>
<evidence type="ECO:0000250" key="2">
    <source>
        <dbReference type="UniProtKB" id="P10092"/>
    </source>
</evidence>
<evidence type="ECO:0000255" key="3"/>
<evidence type="ECO:0000256" key="4">
    <source>
        <dbReference type="SAM" id="MobiDB-lite"/>
    </source>
</evidence>
<evidence type="ECO:0000305" key="5"/>
<evidence type="ECO:0000312" key="6">
    <source>
        <dbReference type="RGD" id="620997"/>
    </source>
</evidence>
<accession>P10093</accession>
<comment type="function">
    <text evidence="2">CALCB/CGRP2 is a peptide hormone that induces vasodilation mediated by the CALCRL-RAMP1 receptor complex. Dilates a variety of vessels including the coronary, cerebral and systemic vasculature. Its abundance in the CNS also points toward a neurotransmitter or neuromodulator role.</text>
</comment>
<comment type="subcellular location">
    <subcellularLocation>
        <location evidence="2">Secreted</location>
    </subcellularLocation>
</comment>
<comment type="similarity">
    <text evidence="5">Belongs to the calcitonin family.</text>
</comment>